<comment type="function">
    <text evidence="1">Catalyzes the attachment of serine to tRNA(Ser). Is also able to aminoacylate tRNA(Sec) with serine, to form the misacylated tRNA L-seryl-tRNA(Sec), which will be further converted into selenocysteinyl-tRNA(Sec).</text>
</comment>
<comment type="catalytic activity">
    <reaction evidence="1">
        <text>tRNA(Ser) + L-serine + ATP = L-seryl-tRNA(Ser) + AMP + diphosphate + H(+)</text>
        <dbReference type="Rhea" id="RHEA:12292"/>
        <dbReference type="Rhea" id="RHEA-COMP:9669"/>
        <dbReference type="Rhea" id="RHEA-COMP:9703"/>
        <dbReference type="ChEBI" id="CHEBI:15378"/>
        <dbReference type="ChEBI" id="CHEBI:30616"/>
        <dbReference type="ChEBI" id="CHEBI:33019"/>
        <dbReference type="ChEBI" id="CHEBI:33384"/>
        <dbReference type="ChEBI" id="CHEBI:78442"/>
        <dbReference type="ChEBI" id="CHEBI:78533"/>
        <dbReference type="ChEBI" id="CHEBI:456215"/>
        <dbReference type="EC" id="6.1.1.11"/>
    </reaction>
</comment>
<comment type="catalytic activity">
    <reaction evidence="1">
        <text>tRNA(Sec) + L-serine + ATP = L-seryl-tRNA(Sec) + AMP + diphosphate + H(+)</text>
        <dbReference type="Rhea" id="RHEA:42580"/>
        <dbReference type="Rhea" id="RHEA-COMP:9742"/>
        <dbReference type="Rhea" id="RHEA-COMP:10128"/>
        <dbReference type="ChEBI" id="CHEBI:15378"/>
        <dbReference type="ChEBI" id="CHEBI:30616"/>
        <dbReference type="ChEBI" id="CHEBI:33019"/>
        <dbReference type="ChEBI" id="CHEBI:33384"/>
        <dbReference type="ChEBI" id="CHEBI:78442"/>
        <dbReference type="ChEBI" id="CHEBI:78533"/>
        <dbReference type="ChEBI" id="CHEBI:456215"/>
        <dbReference type="EC" id="6.1.1.11"/>
    </reaction>
</comment>
<comment type="pathway">
    <text evidence="1">Aminoacyl-tRNA biosynthesis; selenocysteinyl-tRNA(Sec) biosynthesis; L-seryl-tRNA(Sec) from L-serine and tRNA(Sec): step 1/1.</text>
</comment>
<comment type="subunit">
    <text evidence="1">Homodimer. The tRNA molecule binds across the dimer.</text>
</comment>
<comment type="subcellular location">
    <subcellularLocation>
        <location evidence="1">Cytoplasm</location>
    </subcellularLocation>
</comment>
<comment type="domain">
    <text evidence="1">Consists of two distinct domains, a catalytic core and a N-terminal extension that is involved in tRNA binding.</text>
</comment>
<comment type="similarity">
    <text evidence="1">Belongs to the class-II aminoacyl-tRNA synthetase family. Type-1 seryl-tRNA synthetase subfamily.</text>
</comment>
<organism>
    <name type="scientific">Chlorobium phaeobacteroides (strain BS1)</name>
    <dbReference type="NCBI Taxonomy" id="331678"/>
    <lineage>
        <taxon>Bacteria</taxon>
        <taxon>Pseudomonadati</taxon>
        <taxon>Chlorobiota</taxon>
        <taxon>Chlorobiia</taxon>
        <taxon>Chlorobiales</taxon>
        <taxon>Chlorobiaceae</taxon>
        <taxon>Chlorobium/Pelodictyon group</taxon>
        <taxon>Chlorobium</taxon>
    </lineage>
</organism>
<sequence>MLDINYIRQSPEEVAGMLKKRRQEEDCATLDELLEYDRQRRELVQETDALKALRNKVSKDIAVIKRTGQGSAEDLIREMKEVADRIAGMDETLGEIEKQMESILLSLPNKLHPDVPEGYSAEENHICKDPVAFDHALDFPLMDHLDLGNKLGILDFERGAKISGTGFPVYIGKGARLERALLNFMLDCHTENHGYTEVFPPFMVNEDSLRGTGQWPKFADQVYYMNEDNLYAIPTAEVPVTNLHRNEMLKDEELPISYAAYSACFRREAGSYGKDTRGFLRVHQFNKIEMVKFTRPEESYDALEKILQNAEAILNALRIPYRVLLLCSGDISAGATKCYDIEVWSPAEKKYLEASSCSNFEDYQARRANIRFKPAGSSKPTYVHTLNGSGLATSRLMVSLLENYQTAEGTIVVPEVLRKYTGFDLID</sequence>
<accession>B3ENZ9</accession>
<evidence type="ECO:0000255" key="1">
    <source>
        <dbReference type="HAMAP-Rule" id="MF_00176"/>
    </source>
</evidence>
<gene>
    <name evidence="1" type="primary">serS</name>
    <name type="ordered locus">Cphamn1_0825</name>
</gene>
<feature type="chain" id="PRO_1000098047" description="Serine--tRNA ligase">
    <location>
        <begin position="1"/>
        <end position="427"/>
    </location>
</feature>
<feature type="binding site" evidence="1">
    <location>
        <begin position="235"/>
        <end position="237"/>
    </location>
    <ligand>
        <name>L-serine</name>
        <dbReference type="ChEBI" id="CHEBI:33384"/>
    </ligand>
</feature>
<feature type="binding site" evidence="1">
    <location>
        <begin position="266"/>
        <end position="268"/>
    </location>
    <ligand>
        <name>ATP</name>
        <dbReference type="ChEBI" id="CHEBI:30616"/>
    </ligand>
</feature>
<feature type="binding site" evidence="1">
    <location>
        <position position="282"/>
    </location>
    <ligand>
        <name>ATP</name>
        <dbReference type="ChEBI" id="CHEBI:30616"/>
    </ligand>
</feature>
<feature type="binding site" evidence="1">
    <location>
        <position position="289"/>
    </location>
    <ligand>
        <name>L-serine</name>
        <dbReference type="ChEBI" id="CHEBI:33384"/>
    </ligand>
</feature>
<feature type="binding site" evidence="1">
    <location>
        <begin position="353"/>
        <end position="356"/>
    </location>
    <ligand>
        <name>ATP</name>
        <dbReference type="ChEBI" id="CHEBI:30616"/>
    </ligand>
</feature>
<feature type="binding site" evidence="1">
    <location>
        <position position="389"/>
    </location>
    <ligand>
        <name>L-serine</name>
        <dbReference type="ChEBI" id="CHEBI:33384"/>
    </ligand>
</feature>
<dbReference type="EC" id="6.1.1.11" evidence="1"/>
<dbReference type="EMBL" id="CP001101">
    <property type="protein sequence ID" value="ACE03776.1"/>
    <property type="molecule type" value="Genomic_DNA"/>
</dbReference>
<dbReference type="SMR" id="B3ENZ9"/>
<dbReference type="STRING" id="331678.Cphamn1_0825"/>
<dbReference type="KEGG" id="cpb:Cphamn1_0825"/>
<dbReference type="eggNOG" id="COG0172">
    <property type="taxonomic scope" value="Bacteria"/>
</dbReference>
<dbReference type="HOGENOM" id="CLU_023797_0_1_10"/>
<dbReference type="OrthoDB" id="9804647at2"/>
<dbReference type="UniPathway" id="UPA00906">
    <property type="reaction ID" value="UER00895"/>
</dbReference>
<dbReference type="GO" id="GO:0005737">
    <property type="term" value="C:cytoplasm"/>
    <property type="evidence" value="ECO:0007669"/>
    <property type="project" value="UniProtKB-SubCell"/>
</dbReference>
<dbReference type="GO" id="GO:0005524">
    <property type="term" value="F:ATP binding"/>
    <property type="evidence" value="ECO:0007669"/>
    <property type="project" value="UniProtKB-UniRule"/>
</dbReference>
<dbReference type="GO" id="GO:0004828">
    <property type="term" value="F:serine-tRNA ligase activity"/>
    <property type="evidence" value="ECO:0007669"/>
    <property type="project" value="UniProtKB-UniRule"/>
</dbReference>
<dbReference type="GO" id="GO:0016260">
    <property type="term" value="P:selenocysteine biosynthetic process"/>
    <property type="evidence" value="ECO:0007669"/>
    <property type="project" value="UniProtKB-UniRule"/>
</dbReference>
<dbReference type="GO" id="GO:0006434">
    <property type="term" value="P:seryl-tRNA aminoacylation"/>
    <property type="evidence" value="ECO:0007669"/>
    <property type="project" value="UniProtKB-UniRule"/>
</dbReference>
<dbReference type="CDD" id="cd00770">
    <property type="entry name" value="SerRS_core"/>
    <property type="match status" value="1"/>
</dbReference>
<dbReference type="Gene3D" id="3.30.930.10">
    <property type="entry name" value="Bira Bifunctional Protein, Domain 2"/>
    <property type="match status" value="1"/>
</dbReference>
<dbReference type="Gene3D" id="1.10.287.40">
    <property type="entry name" value="Serine-tRNA synthetase, tRNA binding domain"/>
    <property type="match status" value="1"/>
</dbReference>
<dbReference type="HAMAP" id="MF_00176">
    <property type="entry name" value="Ser_tRNA_synth_type1"/>
    <property type="match status" value="1"/>
</dbReference>
<dbReference type="InterPro" id="IPR002314">
    <property type="entry name" value="aa-tRNA-synt_IIb"/>
</dbReference>
<dbReference type="InterPro" id="IPR006195">
    <property type="entry name" value="aa-tRNA-synth_II"/>
</dbReference>
<dbReference type="InterPro" id="IPR045864">
    <property type="entry name" value="aa-tRNA-synth_II/BPL/LPL"/>
</dbReference>
<dbReference type="InterPro" id="IPR002317">
    <property type="entry name" value="Ser-tRNA-ligase_type_1"/>
</dbReference>
<dbReference type="InterPro" id="IPR015866">
    <property type="entry name" value="Ser-tRNA-synth_1_N"/>
</dbReference>
<dbReference type="InterPro" id="IPR042103">
    <property type="entry name" value="SerRS_1_N_sf"/>
</dbReference>
<dbReference type="InterPro" id="IPR033729">
    <property type="entry name" value="SerRS_core"/>
</dbReference>
<dbReference type="InterPro" id="IPR010978">
    <property type="entry name" value="tRNA-bd_arm"/>
</dbReference>
<dbReference type="NCBIfam" id="TIGR00414">
    <property type="entry name" value="serS"/>
    <property type="match status" value="1"/>
</dbReference>
<dbReference type="PANTHER" id="PTHR43697:SF1">
    <property type="entry name" value="SERINE--TRNA LIGASE"/>
    <property type="match status" value="1"/>
</dbReference>
<dbReference type="PANTHER" id="PTHR43697">
    <property type="entry name" value="SERYL-TRNA SYNTHETASE"/>
    <property type="match status" value="1"/>
</dbReference>
<dbReference type="Pfam" id="PF02403">
    <property type="entry name" value="Seryl_tRNA_N"/>
    <property type="match status" value="1"/>
</dbReference>
<dbReference type="Pfam" id="PF00587">
    <property type="entry name" value="tRNA-synt_2b"/>
    <property type="match status" value="1"/>
</dbReference>
<dbReference type="PIRSF" id="PIRSF001529">
    <property type="entry name" value="Ser-tRNA-synth_IIa"/>
    <property type="match status" value="1"/>
</dbReference>
<dbReference type="PRINTS" id="PR00981">
    <property type="entry name" value="TRNASYNTHSER"/>
</dbReference>
<dbReference type="SUPFAM" id="SSF55681">
    <property type="entry name" value="Class II aaRS and biotin synthetases"/>
    <property type="match status" value="1"/>
</dbReference>
<dbReference type="SUPFAM" id="SSF46589">
    <property type="entry name" value="tRNA-binding arm"/>
    <property type="match status" value="1"/>
</dbReference>
<dbReference type="PROSITE" id="PS50862">
    <property type="entry name" value="AA_TRNA_LIGASE_II"/>
    <property type="match status" value="1"/>
</dbReference>
<name>SYS_CHLPB</name>
<protein>
    <recommendedName>
        <fullName evidence="1">Serine--tRNA ligase</fullName>
        <ecNumber evidence="1">6.1.1.11</ecNumber>
    </recommendedName>
    <alternativeName>
        <fullName evidence="1">Seryl-tRNA synthetase</fullName>
        <shortName evidence="1">SerRS</shortName>
    </alternativeName>
    <alternativeName>
        <fullName evidence="1">Seryl-tRNA(Ser/Sec) synthetase</fullName>
    </alternativeName>
</protein>
<reference key="1">
    <citation type="submission" date="2008-06" db="EMBL/GenBank/DDBJ databases">
        <title>Complete sequence of Chlorobium phaeobacteroides BS1.</title>
        <authorList>
            <consortium name="US DOE Joint Genome Institute"/>
            <person name="Lucas S."/>
            <person name="Copeland A."/>
            <person name="Lapidus A."/>
            <person name="Glavina del Rio T."/>
            <person name="Dalin E."/>
            <person name="Tice H."/>
            <person name="Bruce D."/>
            <person name="Goodwin L."/>
            <person name="Pitluck S."/>
            <person name="Schmutz J."/>
            <person name="Larimer F."/>
            <person name="Land M."/>
            <person name="Hauser L."/>
            <person name="Kyrpides N."/>
            <person name="Ovchinnikova G."/>
            <person name="Li T."/>
            <person name="Liu Z."/>
            <person name="Zhao F."/>
            <person name="Overmann J."/>
            <person name="Bryant D.A."/>
            <person name="Richardson P."/>
        </authorList>
    </citation>
    <scope>NUCLEOTIDE SEQUENCE [LARGE SCALE GENOMIC DNA]</scope>
    <source>
        <strain>BS1</strain>
    </source>
</reference>
<keyword id="KW-0030">Aminoacyl-tRNA synthetase</keyword>
<keyword id="KW-0067">ATP-binding</keyword>
<keyword id="KW-0963">Cytoplasm</keyword>
<keyword id="KW-0436">Ligase</keyword>
<keyword id="KW-0547">Nucleotide-binding</keyword>
<keyword id="KW-0648">Protein biosynthesis</keyword>
<proteinExistence type="inferred from homology"/>